<sequence>MGATKKPDLNDPVLRAKLAKGMGHNYYGEPAWPNDLSYIFPVVILGTIACTIGLAVLEPSMIGEPANPFATPLEILPEWYLFPVFQILRTVPNKLLGVLLMASVPAGSLTVPFLENVNQFQNPFRRPVATTVSLIGTAVALWLGIGAALPIDESLTLGLFQFDPTVEYKNLSIFYSYI</sequence>
<proteinExistence type="inferred from homology"/>
<keyword id="KW-0150">Chloroplast</keyword>
<keyword id="KW-0249">Electron transport</keyword>
<keyword id="KW-0472">Membrane</keyword>
<keyword id="KW-0602">Photosynthesis</keyword>
<keyword id="KW-0934">Plastid</keyword>
<keyword id="KW-0793">Thylakoid</keyword>
<keyword id="KW-0812">Transmembrane</keyword>
<keyword id="KW-1133">Transmembrane helix</keyword>
<keyword id="KW-0813">Transport</keyword>
<gene>
    <name evidence="2" type="primary">petD</name>
</gene>
<evidence type="ECO:0000250" key="1"/>
<evidence type="ECO:0000255" key="2">
    <source>
        <dbReference type="HAMAP-Rule" id="MF_01344"/>
    </source>
</evidence>
<dbReference type="EMBL" id="AJ001024">
    <property type="protein sequence ID" value="CAA04481.1"/>
    <property type="molecule type" value="Genomic_DNA"/>
</dbReference>
<dbReference type="PIR" id="T14835">
    <property type="entry name" value="T14835"/>
</dbReference>
<dbReference type="SMR" id="O47044"/>
<dbReference type="GO" id="GO:0009535">
    <property type="term" value="C:chloroplast thylakoid membrane"/>
    <property type="evidence" value="ECO:0007669"/>
    <property type="project" value="UniProtKB-SubCell"/>
</dbReference>
<dbReference type="GO" id="GO:0045158">
    <property type="term" value="F:electron transporter, transferring electrons within cytochrome b6/f complex of photosystem II activity"/>
    <property type="evidence" value="ECO:0007669"/>
    <property type="project" value="UniProtKB-UniRule"/>
</dbReference>
<dbReference type="GO" id="GO:0045156">
    <property type="term" value="F:electron transporter, transferring electrons within the cyclic electron transport pathway of photosynthesis activity"/>
    <property type="evidence" value="ECO:0007669"/>
    <property type="project" value="InterPro"/>
</dbReference>
<dbReference type="GO" id="GO:0016491">
    <property type="term" value="F:oxidoreductase activity"/>
    <property type="evidence" value="ECO:0007669"/>
    <property type="project" value="InterPro"/>
</dbReference>
<dbReference type="GO" id="GO:0009767">
    <property type="term" value="P:photosynthetic electron transport chain"/>
    <property type="evidence" value="ECO:0007669"/>
    <property type="project" value="InterPro"/>
</dbReference>
<dbReference type="CDD" id="cd00290">
    <property type="entry name" value="cytochrome_b_C"/>
    <property type="match status" value="1"/>
</dbReference>
<dbReference type="FunFam" id="1.10.287.980:FF:000001">
    <property type="entry name" value="Cytochrome b6-f complex subunit 4"/>
    <property type="match status" value="1"/>
</dbReference>
<dbReference type="FunFam" id="1.20.5.510:FF:000002">
    <property type="entry name" value="Cytochrome b6-f complex subunit 4"/>
    <property type="match status" value="1"/>
</dbReference>
<dbReference type="Gene3D" id="1.10.287.980">
    <property type="entry name" value="plastocyanin oxidoreductase"/>
    <property type="match status" value="1"/>
</dbReference>
<dbReference type="Gene3D" id="1.20.5.510">
    <property type="entry name" value="Single helix bin"/>
    <property type="match status" value="1"/>
</dbReference>
<dbReference type="HAMAP" id="MF_01344">
    <property type="entry name" value="Cytb6_f_subIV"/>
    <property type="match status" value="1"/>
</dbReference>
<dbReference type="InterPro" id="IPR005798">
    <property type="entry name" value="Cyt_b/b6_C"/>
</dbReference>
<dbReference type="InterPro" id="IPR036150">
    <property type="entry name" value="Cyt_b/b6_C_sf"/>
</dbReference>
<dbReference type="InterPro" id="IPR005870">
    <property type="entry name" value="Cyt_b6/f_cplx_suIV"/>
</dbReference>
<dbReference type="InterPro" id="IPR048260">
    <property type="entry name" value="Cytochrome_b_C_euk/bac"/>
</dbReference>
<dbReference type="NCBIfam" id="TIGR01156">
    <property type="entry name" value="cytb6_f_IV"/>
    <property type="match status" value="1"/>
</dbReference>
<dbReference type="PANTHER" id="PTHR19271">
    <property type="entry name" value="CYTOCHROME B"/>
    <property type="match status" value="1"/>
</dbReference>
<dbReference type="PANTHER" id="PTHR19271:SF40">
    <property type="entry name" value="CYTOCHROME B"/>
    <property type="match status" value="1"/>
</dbReference>
<dbReference type="Pfam" id="PF00032">
    <property type="entry name" value="Cytochrom_B_C"/>
    <property type="match status" value="1"/>
</dbReference>
<dbReference type="PIRSF" id="PIRSF000033">
    <property type="entry name" value="B6f_17K"/>
    <property type="match status" value="1"/>
</dbReference>
<dbReference type="SUPFAM" id="SSF81648">
    <property type="entry name" value="a domain/subunit of cytochrome bc1 complex (Ubiquinol-cytochrome c reductase)"/>
    <property type="match status" value="1"/>
</dbReference>
<dbReference type="PROSITE" id="PS51003">
    <property type="entry name" value="CYTB_CTER"/>
    <property type="match status" value="1"/>
</dbReference>
<reference key="1">
    <citation type="submission" date="1997-08" db="EMBL/GenBank/DDBJ databases">
        <title>petB and petD from Picea abies.</title>
        <authorList>
            <person name="Philipps A."/>
            <person name="Sutter A."/>
            <person name="Wild A."/>
        </authorList>
    </citation>
    <scope>NUCLEOTIDE SEQUENCE [GENOMIC DNA]</scope>
</reference>
<feature type="chain" id="PRO_0000061882" description="Cytochrome b6-f complex subunit 4">
    <location>
        <begin position="1"/>
        <end position="178"/>
    </location>
</feature>
<feature type="transmembrane region" description="Helical" evidence="2">
    <location>
        <begin position="36"/>
        <end position="56"/>
    </location>
</feature>
<feature type="transmembrane region" description="Helical" evidence="2">
    <location>
        <begin position="95"/>
        <end position="115"/>
    </location>
</feature>
<feature type="transmembrane region" description="Helical" evidence="2">
    <location>
        <begin position="131"/>
        <end position="151"/>
    </location>
</feature>
<protein>
    <recommendedName>
        <fullName evidence="2">Cytochrome b6-f complex subunit 4</fullName>
    </recommendedName>
    <alternativeName>
        <fullName evidence="2">17 kDa polypeptide</fullName>
    </alternativeName>
</protein>
<accession>O47044</accession>
<geneLocation type="chloroplast"/>
<comment type="function">
    <text evidence="2">Component of the cytochrome b6-f complex, which mediates electron transfer between photosystem II (PSII) and photosystem I (PSI), cyclic electron flow around PSI, and state transitions.</text>
</comment>
<comment type="subunit">
    <text evidence="1">The 4 large subunits of the cytochrome b6-f complex are cytochrome b6, subunit IV (17 kDa polypeptide, petD), cytochrome f and the Rieske protein, while the 4 small subunits are petG, petL, petM and petN. The complex functions as a dimer (By similarity).</text>
</comment>
<comment type="subcellular location">
    <subcellularLocation>
        <location evidence="2">Plastid</location>
        <location evidence="2">Chloroplast thylakoid membrane</location>
        <topology evidence="2">Multi-pass membrane protein</topology>
    </subcellularLocation>
</comment>
<comment type="similarity">
    <text evidence="2">Belongs to the cytochrome b family. PetD subfamily.</text>
</comment>
<organism>
    <name type="scientific">Picea abies</name>
    <name type="common">Norway spruce</name>
    <name type="synonym">Picea excelsa</name>
    <dbReference type="NCBI Taxonomy" id="3329"/>
    <lineage>
        <taxon>Eukaryota</taxon>
        <taxon>Viridiplantae</taxon>
        <taxon>Streptophyta</taxon>
        <taxon>Embryophyta</taxon>
        <taxon>Tracheophyta</taxon>
        <taxon>Spermatophyta</taxon>
        <taxon>Pinopsida</taxon>
        <taxon>Pinidae</taxon>
        <taxon>Conifers I</taxon>
        <taxon>Pinales</taxon>
        <taxon>Pinaceae</taxon>
        <taxon>Picea</taxon>
    </lineage>
</organism>
<name>PETD_PICAB</name>